<gene>
    <name type="primary">gag-pol</name>
</gene>
<organism>
    <name type="scientific">Mink cell focus-forming murine leukemia virus (isolate CI-3)</name>
    <dbReference type="NCBI Taxonomy" id="11936"/>
    <lineage>
        <taxon>Viruses</taxon>
        <taxon>Riboviria</taxon>
        <taxon>Pararnavirae</taxon>
        <taxon>Artverviricota</taxon>
        <taxon>Revtraviricetes</taxon>
        <taxon>Ortervirales</taxon>
        <taxon>Retroviridae</taxon>
        <taxon>Orthoretrovirinae</taxon>
        <taxon>Gammaretrovirus</taxon>
        <taxon>Murine leukemia virus</taxon>
    </lineage>
</organism>
<name>POL_MCFF3</name>
<comment type="function">
    <text evidence="1">Integrase catalyzes viral DNA integration into the host chromosome, by performing a series of DNA cutting and joining reactions. This enzyme activity takes place after virion entry into a cell and reverse transcription of the RNA genome in dsDNA. The first step in the integration process is 3' processing. This step requires a complex comprising the viral genome, matrix protein and integrase. This complex is called the pre-integration complex (PIC). The integrase protein removes 2 nucleotides from each 3' end of the viral DNA, leaving recessed CA OH's at the 3' ends. In the second step that requires cell division, the PIC enters cell nucleus. In the third step, termed strand transfer, the integrase protein joins the previously processed 3' ends to the 5' ends of strands of target cellular DNA at the site of integration. The last step is viral DNA integration into host chromosome (By similarity).</text>
</comment>
<comment type="cofactor">
    <cofactor evidence="1">
        <name>Mg(2+)</name>
        <dbReference type="ChEBI" id="CHEBI:18420"/>
    </cofactor>
    <text evidence="1">Magnesium ions are required for integrase activity. Binds at least 1, maybe 2 magnesium ions.</text>
</comment>
<comment type="PTM">
    <text evidence="1">Specific enzymatic cleavages by the viral protease yield mature proteins. The protease is released by autocatalytic cleavage. The polyprotein is cleaved during and after budding, this process is termed maturation (By similarity).</text>
</comment>
<comment type="miscellaneous">
    <text>This protein is translated as a gag-pol fusion protein by episodic readthrough of the gag protein termination codon.</text>
</comment>
<proteinExistence type="inferred from homology"/>
<feature type="chain" id="PRO_0000125489" description="Gag-Pol polyprotein">
    <location>
        <begin position="1" status="less than"/>
        <end position="156"/>
    </location>
</feature>
<feature type="chain" id="PRO_0000390821" description="Integrase p46">
    <location>
        <begin position="1" status="less than"/>
        <end position="156"/>
    </location>
</feature>
<feature type="non-terminal residue">
    <location>
        <position position="1"/>
    </location>
</feature>
<organismHost>
    <name type="scientific">Mus musculus</name>
    <name type="common">Mouse</name>
    <dbReference type="NCBI Taxonomy" id="10090"/>
</organismHost>
<accession>P16103</accession>
<sequence length="156" mass="17366">RNTPGPHGLTPYEILYGAPPPLVNFHDPDMSELTNSPSLQAHLQALQTVQREIWRPLAEAYRDRLDQPVIPHPFRTGDSVWVRRHQTKNSEPRWKGPYTVLLTTPTALKVDGIAAWIHAAHVKAATTPPAGTASGPTWKVQRSQNPLKIRLTRGAP</sequence>
<protein>
    <recommendedName>
        <fullName>Gag-Pol polyprotein</fullName>
        <shortName>Pr180gag-pol</shortName>
    </recommendedName>
    <component>
        <recommendedName>
            <fullName>Integrase p46</fullName>
            <shortName>IN</shortName>
            <ecNumber evidence="2">2.7.7.-</ecNumber>
            <ecNumber evidence="2">3.1.-.-</ecNumber>
        </recommendedName>
    </component>
</protein>
<reference key="1">
    <citation type="journal article" date="1984" name="J. Virol.">
        <title>Envelope gene sequence of two in vitro-generated mink cell focus-forming murine leukemia viruses which contain the entire gp70 sequence of the endogenous nonecotropic parent.</title>
        <authorList>
            <person name="Mark G.E."/>
            <person name="Rapp U.R."/>
        </authorList>
    </citation>
    <scope>NUCLEOTIDE SEQUENCE [GENOMIC RNA]</scope>
</reference>
<dbReference type="EC" id="2.7.7.-" evidence="2"/>
<dbReference type="EC" id="3.1.-.-" evidence="2"/>
<dbReference type="EMBL" id="K02725">
    <property type="protein sequence ID" value="AAA46374.1"/>
    <property type="molecule type" value="Genomic_RNA"/>
</dbReference>
<dbReference type="SMR" id="P16103"/>
<dbReference type="GO" id="GO:0004519">
    <property type="term" value="F:endonuclease activity"/>
    <property type="evidence" value="ECO:0007669"/>
    <property type="project" value="UniProtKB-KW"/>
</dbReference>
<dbReference type="GO" id="GO:0046872">
    <property type="term" value="F:metal ion binding"/>
    <property type="evidence" value="ECO:0007669"/>
    <property type="project" value="UniProtKB-KW"/>
</dbReference>
<dbReference type="GO" id="GO:0016779">
    <property type="term" value="F:nucleotidyltransferase activity"/>
    <property type="evidence" value="ECO:0007669"/>
    <property type="project" value="UniProtKB-KW"/>
</dbReference>
<dbReference type="GO" id="GO:0015074">
    <property type="term" value="P:DNA integration"/>
    <property type="evidence" value="ECO:0007669"/>
    <property type="project" value="UniProtKB-KW"/>
</dbReference>
<dbReference type="GO" id="GO:0075713">
    <property type="term" value="P:establishment of integrated proviral latency"/>
    <property type="evidence" value="ECO:0007669"/>
    <property type="project" value="UniProtKB-KW"/>
</dbReference>
<dbReference type="GO" id="GO:0046718">
    <property type="term" value="P:symbiont entry into host cell"/>
    <property type="evidence" value="ECO:0007669"/>
    <property type="project" value="UniProtKB-KW"/>
</dbReference>
<dbReference type="GO" id="GO:0044826">
    <property type="term" value="P:viral genome integration into host DNA"/>
    <property type="evidence" value="ECO:0007669"/>
    <property type="project" value="UniProtKB-KW"/>
</dbReference>
<dbReference type="FunFam" id="2.30.30.850:FF:000001">
    <property type="entry name" value="Gag-Pol polyprotein"/>
    <property type="match status" value="1"/>
</dbReference>
<dbReference type="Gene3D" id="2.30.30.850">
    <property type="match status" value="1"/>
</dbReference>
<dbReference type="InterPro" id="IPR040643">
    <property type="entry name" value="MLVIN_C"/>
</dbReference>
<dbReference type="Pfam" id="PF18697">
    <property type="entry name" value="MLVIN_C"/>
    <property type="match status" value="1"/>
</dbReference>
<evidence type="ECO:0000250" key="1"/>
<evidence type="ECO:0000250" key="2">
    <source>
        <dbReference type="UniProtKB" id="P03355"/>
    </source>
</evidence>
<keyword id="KW-0229">DNA integration</keyword>
<keyword id="KW-0255">Endonuclease</keyword>
<keyword id="KW-0378">Hydrolase</keyword>
<keyword id="KW-0460">Magnesium</keyword>
<keyword id="KW-0479">Metal-binding</keyword>
<keyword id="KW-0540">Nuclease</keyword>
<keyword id="KW-0548">Nucleotidyltransferase</keyword>
<keyword id="KW-0808">Transferase</keyword>
<keyword id="KW-1179">Viral genome integration</keyword>
<keyword id="KW-1160">Virus entry into host cell</keyword>